<proteinExistence type="inferred from homology"/>
<name>F16PA_PSEFS</name>
<dbReference type="EC" id="3.1.3.11" evidence="1"/>
<dbReference type="EMBL" id="AM181176">
    <property type="protein sequence ID" value="CAY46632.1"/>
    <property type="molecule type" value="Genomic_DNA"/>
</dbReference>
<dbReference type="RefSeq" id="WP_003237460.1">
    <property type="nucleotide sequence ID" value="NC_012660.1"/>
</dbReference>
<dbReference type="SMR" id="C3K7D6"/>
<dbReference type="STRING" id="294.SRM1_00404"/>
<dbReference type="eggNOG" id="COG0158">
    <property type="taxonomic scope" value="Bacteria"/>
</dbReference>
<dbReference type="HOGENOM" id="CLU_039977_0_0_6"/>
<dbReference type="OrthoDB" id="9806756at2"/>
<dbReference type="UniPathway" id="UPA00138"/>
<dbReference type="GO" id="GO:0005829">
    <property type="term" value="C:cytosol"/>
    <property type="evidence" value="ECO:0007669"/>
    <property type="project" value="TreeGrafter"/>
</dbReference>
<dbReference type="GO" id="GO:0042132">
    <property type="term" value="F:fructose 1,6-bisphosphate 1-phosphatase activity"/>
    <property type="evidence" value="ECO:0007669"/>
    <property type="project" value="UniProtKB-UniRule"/>
</dbReference>
<dbReference type="GO" id="GO:0000287">
    <property type="term" value="F:magnesium ion binding"/>
    <property type="evidence" value="ECO:0007669"/>
    <property type="project" value="UniProtKB-UniRule"/>
</dbReference>
<dbReference type="GO" id="GO:0030388">
    <property type="term" value="P:fructose 1,6-bisphosphate metabolic process"/>
    <property type="evidence" value="ECO:0007669"/>
    <property type="project" value="TreeGrafter"/>
</dbReference>
<dbReference type="GO" id="GO:0006002">
    <property type="term" value="P:fructose 6-phosphate metabolic process"/>
    <property type="evidence" value="ECO:0007669"/>
    <property type="project" value="TreeGrafter"/>
</dbReference>
<dbReference type="GO" id="GO:0006000">
    <property type="term" value="P:fructose metabolic process"/>
    <property type="evidence" value="ECO:0007669"/>
    <property type="project" value="TreeGrafter"/>
</dbReference>
<dbReference type="GO" id="GO:0006094">
    <property type="term" value="P:gluconeogenesis"/>
    <property type="evidence" value="ECO:0007669"/>
    <property type="project" value="UniProtKB-UniRule"/>
</dbReference>
<dbReference type="GO" id="GO:0005986">
    <property type="term" value="P:sucrose biosynthetic process"/>
    <property type="evidence" value="ECO:0007669"/>
    <property type="project" value="TreeGrafter"/>
</dbReference>
<dbReference type="CDD" id="cd00354">
    <property type="entry name" value="FBPase"/>
    <property type="match status" value="1"/>
</dbReference>
<dbReference type="FunFam" id="3.30.540.10:FF:000006">
    <property type="entry name" value="Fructose-1,6-bisphosphatase class 1"/>
    <property type="match status" value="1"/>
</dbReference>
<dbReference type="FunFam" id="3.40.190.80:FF:000011">
    <property type="entry name" value="Fructose-1,6-bisphosphatase class 1"/>
    <property type="match status" value="1"/>
</dbReference>
<dbReference type="Gene3D" id="3.40.190.80">
    <property type="match status" value="1"/>
</dbReference>
<dbReference type="Gene3D" id="3.30.540.10">
    <property type="entry name" value="Fructose-1,6-Bisphosphatase, subunit A, domain 1"/>
    <property type="match status" value="1"/>
</dbReference>
<dbReference type="HAMAP" id="MF_01855">
    <property type="entry name" value="FBPase_class1"/>
    <property type="match status" value="1"/>
</dbReference>
<dbReference type="InterPro" id="IPR044015">
    <property type="entry name" value="FBPase_C_dom"/>
</dbReference>
<dbReference type="InterPro" id="IPR000146">
    <property type="entry name" value="FBPase_class-1"/>
</dbReference>
<dbReference type="InterPro" id="IPR033391">
    <property type="entry name" value="FBPase_N"/>
</dbReference>
<dbReference type="InterPro" id="IPR028343">
    <property type="entry name" value="FBPtase"/>
</dbReference>
<dbReference type="NCBIfam" id="NF006779">
    <property type="entry name" value="PRK09293.1-3"/>
    <property type="match status" value="1"/>
</dbReference>
<dbReference type="NCBIfam" id="NF006780">
    <property type="entry name" value="PRK09293.1-4"/>
    <property type="match status" value="1"/>
</dbReference>
<dbReference type="PANTHER" id="PTHR11556">
    <property type="entry name" value="FRUCTOSE-1,6-BISPHOSPHATASE-RELATED"/>
    <property type="match status" value="1"/>
</dbReference>
<dbReference type="PANTHER" id="PTHR11556:SF35">
    <property type="entry name" value="SEDOHEPTULOSE-1,7-BISPHOSPHATASE, CHLOROPLASTIC"/>
    <property type="match status" value="1"/>
</dbReference>
<dbReference type="Pfam" id="PF00316">
    <property type="entry name" value="FBPase"/>
    <property type="match status" value="1"/>
</dbReference>
<dbReference type="Pfam" id="PF18913">
    <property type="entry name" value="FBPase_C"/>
    <property type="match status" value="1"/>
</dbReference>
<dbReference type="PIRSF" id="PIRSF500210">
    <property type="entry name" value="FBPtase"/>
    <property type="match status" value="1"/>
</dbReference>
<dbReference type="PIRSF" id="PIRSF000904">
    <property type="entry name" value="FBPtase_SBPase"/>
    <property type="match status" value="1"/>
</dbReference>
<dbReference type="PRINTS" id="PR00115">
    <property type="entry name" value="F16BPHPHTASE"/>
</dbReference>
<dbReference type="SUPFAM" id="SSF56655">
    <property type="entry name" value="Carbohydrate phosphatase"/>
    <property type="match status" value="1"/>
</dbReference>
<organism>
    <name type="scientific">Pseudomonas fluorescens (strain SBW25)</name>
    <dbReference type="NCBI Taxonomy" id="216595"/>
    <lineage>
        <taxon>Bacteria</taxon>
        <taxon>Pseudomonadati</taxon>
        <taxon>Pseudomonadota</taxon>
        <taxon>Gammaproteobacteria</taxon>
        <taxon>Pseudomonadales</taxon>
        <taxon>Pseudomonadaceae</taxon>
        <taxon>Pseudomonas</taxon>
    </lineage>
</organism>
<accession>C3K7D6</accession>
<keyword id="KW-0119">Carbohydrate metabolism</keyword>
<keyword id="KW-0963">Cytoplasm</keyword>
<keyword id="KW-0378">Hydrolase</keyword>
<keyword id="KW-0460">Magnesium</keyword>
<keyword id="KW-0479">Metal-binding</keyword>
<sequence>MSRVTLSRYLIEQTRSNNTPADLRFLIEVVARACKEISHAVSKGALGGVLGSMGTENVQGEVQKKLDVISNEILLEANEWGGHLAGMASEEMDNAYQIPGKYPKGAYLLVFDPLDGSSNIDINAPVGTIFSVLRCPNEYLSQNEALNEKAFLQPGTEQVAAGYAIYGPQTMLVLTLGDGVKGFTLDREMGSFVLTHEDITIPASTQEFAINMSNQRHWEEPVTRYVGELMAGEEGPLKKNFNMRWVAAMVADVHRILTRGGLFMYPRDSREPSKPGKLRLMYEANPMSFLVEQAGGASTDGHQRILDIQPEGLHQRVAVFLGSKEEVERVTAYHKK</sequence>
<comment type="catalytic activity">
    <reaction evidence="1">
        <text>beta-D-fructose 1,6-bisphosphate + H2O = beta-D-fructose 6-phosphate + phosphate</text>
        <dbReference type="Rhea" id="RHEA:11064"/>
        <dbReference type="ChEBI" id="CHEBI:15377"/>
        <dbReference type="ChEBI" id="CHEBI:32966"/>
        <dbReference type="ChEBI" id="CHEBI:43474"/>
        <dbReference type="ChEBI" id="CHEBI:57634"/>
        <dbReference type="EC" id="3.1.3.11"/>
    </reaction>
</comment>
<comment type="cofactor">
    <cofactor evidence="1">
        <name>Mg(2+)</name>
        <dbReference type="ChEBI" id="CHEBI:18420"/>
    </cofactor>
    <text evidence="1">Binds 2 magnesium ions per subunit.</text>
</comment>
<comment type="pathway">
    <text evidence="1">Carbohydrate biosynthesis; gluconeogenesis.</text>
</comment>
<comment type="subunit">
    <text evidence="1">Homotetramer.</text>
</comment>
<comment type="subcellular location">
    <subcellularLocation>
        <location evidence="1">Cytoplasm</location>
    </subcellularLocation>
</comment>
<comment type="similarity">
    <text evidence="1">Belongs to the FBPase class 1 family.</text>
</comment>
<feature type="chain" id="PRO_1000216150" description="Fructose-1,6-bisphosphatase class 1">
    <location>
        <begin position="1"/>
        <end position="336"/>
    </location>
</feature>
<feature type="binding site" evidence="1">
    <location>
        <position position="90"/>
    </location>
    <ligand>
        <name>Mg(2+)</name>
        <dbReference type="ChEBI" id="CHEBI:18420"/>
        <label>1</label>
    </ligand>
</feature>
<feature type="binding site" evidence="1">
    <location>
        <position position="112"/>
    </location>
    <ligand>
        <name>Mg(2+)</name>
        <dbReference type="ChEBI" id="CHEBI:18420"/>
        <label>1</label>
    </ligand>
</feature>
<feature type="binding site" evidence="1">
    <location>
        <position position="112"/>
    </location>
    <ligand>
        <name>Mg(2+)</name>
        <dbReference type="ChEBI" id="CHEBI:18420"/>
        <label>2</label>
    </ligand>
</feature>
<feature type="binding site" evidence="1">
    <location>
        <position position="114"/>
    </location>
    <ligand>
        <name>Mg(2+)</name>
        <dbReference type="ChEBI" id="CHEBI:18420"/>
        <label>1</label>
    </ligand>
</feature>
<feature type="binding site" evidence="1">
    <location>
        <begin position="115"/>
        <end position="118"/>
    </location>
    <ligand>
        <name>substrate</name>
    </ligand>
</feature>
<feature type="binding site" evidence="1">
    <location>
        <position position="115"/>
    </location>
    <ligand>
        <name>Mg(2+)</name>
        <dbReference type="ChEBI" id="CHEBI:18420"/>
        <label>2</label>
    </ligand>
</feature>
<feature type="binding site" evidence="1">
    <location>
        <position position="211"/>
    </location>
    <ligand>
        <name>substrate</name>
    </ligand>
</feature>
<feature type="binding site" evidence="1">
    <location>
        <position position="277"/>
    </location>
    <ligand>
        <name>substrate</name>
    </ligand>
</feature>
<feature type="binding site" evidence="1">
    <location>
        <position position="283"/>
    </location>
    <ligand>
        <name>Mg(2+)</name>
        <dbReference type="ChEBI" id="CHEBI:18420"/>
        <label>2</label>
    </ligand>
</feature>
<evidence type="ECO:0000255" key="1">
    <source>
        <dbReference type="HAMAP-Rule" id="MF_01855"/>
    </source>
</evidence>
<gene>
    <name evidence="1" type="primary">fbp</name>
    <name type="ordered locus">PFLU_0355</name>
</gene>
<reference key="1">
    <citation type="journal article" date="2009" name="Genome Biol.">
        <title>Genomic and genetic analyses of diversity and plant interactions of Pseudomonas fluorescens.</title>
        <authorList>
            <person name="Silby M.W."/>
            <person name="Cerdeno-Tarraga A.M."/>
            <person name="Vernikos G.S."/>
            <person name="Giddens S.R."/>
            <person name="Jackson R.W."/>
            <person name="Preston G.M."/>
            <person name="Zhang X.-X."/>
            <person name="Moon C.D."/>
            <person name="Gehrig S.M."/>
            <person name="Godfrey S.A.C."/>
            <person name="Knight C.G."/>
            <person name="Malone J.G."/>
            <person name="Robinson Z."/>
            <person name="Spiers A.J."/>
            <person name="Harris S."/>
            <person name="Challis G.L."/>
            <person name="Yaxley A.M."/>
            <person name="Harris D."/>
            <person name="Seeger K."/>
            <person name="Murphy L."/>
            <person name="Rutter S."/>
            <person name="Squares R."/>
            <person name="Quail M.A."/>
            <person name="Saunders E."/>
            <person name="Mavromatis K."/>
            <person name="Brettin T.S."/>
            <person name="Bentley S.D."/>
            <person name="Hothersall J."/>
            <person name="Stephens E."/>
            <person name="Thomas C.M."/>
            <person name="Parkhill J."/>
            <person name="Levy S.B."/>
            <person name="Rainey P.B."/>
            <person name="Thomson N.R."/>
        </authorList>
    </citation>
    <scope>NUCLEOTIDE SEQUENCE [LARGE SCALE GENOMIC DNA]</scope>
    <source>
        <strain>SBW25</strain>
    </source>
</reference>
<protein>
    <recommendedName>
        <fullName evidence="1">Fructose-1,6-bisphosphatase class 1</fullName>
        <shortName evidence="1">FBPase class 1</shortName>
        <ecNumber evidence="1">3.1.3.11</ecNumber>
    </recommendedName>
    <alternativeName>
        <fullName evidence="1">D-fructose-1,6-bisphosphate 1-phosphohydrolase class 1</fullName>
    </alternativeName>
</protein>